<dbReference type="EC" id="4.1.1.65" evidence="1"/>
<dbReference type="EMBL" id="AE002098">
    <property type="protein sequence ID" value="AAF41369.1"/>
    <property type="molecule type" value="Genomic_DNA"/>
</dbReference>
<dbReference type="PIR" id="B81138">
    <property type="entry name" value="B81138"/>
</dbReference>
<dbReference type="RefSeq" id="NP_274001.1">
    <property type="nucleotide sequence ID" value="NC_003112.2"/>
</dbReference>
<dbReference type="RefSeq" id="WP_002225313.1">
    <property type="nucleotide sequence ID" value="NC_003112.2"/>
</dbReference>
<dbReference type="STRING" id="122586.NMB0963"/>
<dbReference type="PaxDb" id="122586-NMB0963"/>
<dbReference type="KEGG" id="nme:NMB0963"/>
<dbReference type="PATRIC" id="fig|122586.8.peg.1219"/>
<dbReference type="HOGENOM" id="CLU_072492_0_0_4"/>
<dbReference type="InParanoid" id="Q9JZP0"/>
<dbReference type="OrthoDB" id="9790893at2"/>
<dbReference type="UniPathway" id="UPA00558">
    <property type="reaction ID" value="UER00616"/>
</dbReference>
<dbReference type="Proteomes" id="UP000000425">
    <property type="component" value="Chromosome"/>
</dbReference>
<dbReference type="GO" id="GO:0005886">
    <property type="term" value="C:plasma membrane"/>
    <property type="evidence" value="ECO:0007669"/>
    <property type="project" value="UniProtKB-SubCell"/>
</dbReference>
<dbReference type="GO" id="GO:0004609">
    <property type="term" value="F:phosphatidylserine decarboxylase activity"/>
    <property type="evidence" value="ECO:0007669"/>
    <property type="project" value="UniProtKB-UniRule"/>
</dbReference>
<dbReference type="GO" id="GO:0006646">
    <property type="term" value="P:phosphatidylethanolamine biosynthetic process"/>
    <property type="evidence" value="ECO:0007669"/>
    <property type="project" value="UniProtKB-UniRule"/>
</dbReference>
<dbReference type="HAMAP" id="MF_00664">
    <property type="entry name" value="PS_decarb_PSD_A"/>
    <property type="match status" value="1"/>
</dbReference>
<dbReference type="InterPro" id="IPR003817">
    <property type="entry name" value="PS_Dcarbxylase"/>
</dbReference>
<dbReference type="InterPro" id="IPR033175">
    <property type="entry name" value="PSD-A"/>
</dbReference>
<dbReference type="NCBIfam" id="TIGR00164">
    <property type="entry name" value="AS_decarb"/>
    <property type="match status" value="1"/>
</dbReference>
<dbReference type="NCBIfam" id="NF003678">
    <property type="entry name" value="PRK05305.1-2"/>
    <property type="match status" value="1"/>
</dbReference>
<dbReference type="NCBIfam" id="NF003680">
    <property type="entry name" value="PRK05305.1-5"/>
    <property type="match status" value="1"/>
</dbReference>
<dbReference type="PANTHER" id="PTHR35809">
    <property type="entry name" value="ARCHAETIDYLSERINE DECARBOXYLASE PROENZYME-RELATED"/>
    <property type="match status" value="1"/>
</dbReference>
<dbReference type="PANTHER" id="PTHR35809:SF1">
    <property type="entry name" value="ARCHAETIDYLSERINE DECARBOXYLASE PROENZYME-RELATED"/>
    <property type="match status" value="1"/>
</dbReference>
<dbReference type="Pfam" id="PF02666">
    <property type="entry name" value="PS_Dcarbxylase"/>
    <property type="match status" value="1"/>
</dbReference>
<reference key="1">
    <citation type="journal article" date="2000" name="Science">
        <title>Complete genome sequence of Neisseria meningitidis serogroup B strain MC58.</title>
        <authorList>
            <person name="Tettelin H."/>
            <person name="Saunders N.J."/>
            <person name="Heidelberg J.F."/>
            <person name="Jeffries A.C."/>
            <person name="Nelson K.E."/>
            <person name="Eisen J.A."/>
            <person name="Ketchum K.A."/>
            <person name="Hood D.W."/>
            <person name="Peden J.F."/>
            <person name="Dodson R.J."/>
            <person name="Nelson W.C."/>
            <person name="Gwinn M.L."/>
            <person name="DeBoy R.T."/>
            <person name="Peterson J.D."/>
            <person name="Hickey E.K."/>
            <person name="Haft D.H."/>
            <person name="Salzberg S.L."/>
            <person name="White O."/>
            <person name="Fleischmann R.D."/>
            <person name="Dougherty B.A."/>
            <person name="Mason T.M."/>
            <person name="Ciecko A."/>
            <person name="Parksey D.S."/>
            <person name="Blair E."/>
            <person name="Cittone H."/>
            <person name="Clark E.B."/>
            <person name="Cotton M.D."/>
            <person name="Utterback T.R."/>
            <person name="Khouri H.M."/>
            <person name="Qin H."/>
            <person name="Vamathevan J.J."/>
            <person name="Gill J."/>
            <person name="Scarlato V."/>
            <person name="Masignani V."/>
            <person name="Pizza M."/>
            <person name="Grandi G."/>
            <person name="Sun L."/>
            <person name="Smith H.O."/>
            <person name="Fraser C.M."/>
            <person name="Moxon E.R."/>
            <person name="Rappuoli R."/>
            <person name="Venter J.C."/>
        </authorList>
    </citation>
    <scope>NUCLEOTIDE SEQUENCE [LARGE SCALE GENOMIC DNA]</scope>
    <source>
        <strain>ATCC BAA-335 / MC58</strain>
    </source>
</reference>
<keyword id="KW-1003">Cell membrane</keyword>
<keyword id="KW-0210">Decarboxylase</keyword>
<keyword id="KW-0444">Lipid biosynthesis</keyword>
<keyword id="KW-0443">Lipid metabolism</keyword>
<keyword id="KW-0456">Lyase</keyword>
<keyword id="KW-0472">Membrane</keyword>
<keyword id="KW-0594">Phospholipid biosynthesis</keyword>
<keyword id="KW-1208">Phospholipid metabolism</keyword>
<keyword id="KW-0670">Pyruvate</keyword>
<keyword id="KW-1185">Reference proteome</keyword>
<keyword id="KW-0865">Zymogen</keyword>
<organism>
    <name type="scientific">Neisseria meningitidis serogroup B (strain ATCC BAA-335 / MC58)</name>
    <dbReference type="NCBI Taxonomy" id="122586"/>
    <lineage>
        <taxon>Bacteria</taxon>
        <taxon>Pseudomonadati</taxon>
        <taxon>Pseudomonadota</taxon>
        <taxon>Betaproteobacteria</taxon>
        <taxon>Neisseriales</taxon>
        <taxon>Neisseriaceae</taxon>
        <taxon>Neisseria</taxon>
    </lineage>
</organism>
<protein>
    <recommendedName>
        <fullName evidence="1">Phosphatidylserine decarboxylase proenzyme</fullName>
        <ecNumber evidence="1">4.1.1.65</ecNumber>
    </recommendedName>
    <component>
        <recommendedName>
            <fullName evidence="1">Phosphatidylserine decarboxylase alpha chain</fullName>
        </recommendedName>
    </component>
    <component>
        <recommendedName>
            <fullName evidence="1">Phosphatidylserine decarboxylase beta chain</fullName>
        </recommendedName>
    </component>
</protein>
<name>PSD_NEIMB</name>
<accession>Q9JZP0</accession>
<proteinExistence type="inferred from homology"/>
<gene>
    <name evidence="1" type="primary">psd</name>
    <name type="ordered locus">NMB0963</name>
</gene>
<comment type="function">
    <text evidence="1">Catalyzes the formation of phosphatidylethanolamine (PtdEtn) from phosphatidylserine (PtdSer).</text>
</comment>
<comment type="catalytic activity">
    <reaction evidence="1">
        <text>a 1,2-diacyl-sn-glycero-3-phospho-L-serine + H(+) = a 1,2-diacyl-sn-glycero-3-phosphoethanolamine + CO2</text>
        <dbReference type="Rhea" id="RHEA:20828"/>
        <dbReference type="ChEBI" id="CHEBI:15378"/>
        <dbReference type="ChEBI" id="CHEBI:16526"/>
        <dbReference type="ChEBI" id="CHEBI:57262"/>
        <dbReference type="ChEBI" id="CHEBI:64612"/>
        <dbReference type="EC" id="4.1.1.65"/>
    </reaction>
</comment>
<comment type="cofactor">
    <cofactor evidence="1">
        <name>pyruvate</name>
        <dbReference type="ChEBI" id="CHEBI:15361"/>
    </cofactor>
    <text evidence="1">Binds 1 pyruvoyl group covalently per subunit.</text>
</comment>
<comment type="pathway">
    <text evidence="1">Phospholipid metabolism; phosphatidylethanolamine biosynthesis; phosphatidylethanolamine from CDP-diacylglycerol: step 2/2.</text>
</comment>
<comment type="subunit">
    <text evidence="1">Heterodimer of a large membrane-associated beta subunit and a small pyruvoyl-containing alpha subunit.</text>
</comment>
<comment type="subcellular location">
    <subcellularLocation>
        <location evidence="1">Cell membrane</location>
        <topology evidence="1">Peripheral membrane protein</topology>
    </subcellularLocation>
</comment>
<comment type="PTM">
    <text evidence="1">Is synthesized initially as an inactive proenzyme. Formation of the active enzyme involves a self-maturation process in which the active site pyruvoyl group is generated from an internal serine residue via an autocatalytic post-translational modification. Two non-identical subunits are generated from the proenzyme in this reaction, and the pyruvate is formed at the N-terminus of the alpha chain, which is derived from the carboxyl end of the proenzyme. The post-translation cleavage follows an unusual pathway, termed non-hydrolytic serinolysis, in which the side chain hydroxyl group of the serine supplies its oxygen atom to form the C-terminus of the beta chain, while the remainder of the serine residue undergoes an oxidative deamination to produce ammonia and the pyruvoyl prosthetic group on the alpha chain.</text>
</comment>
<comment type="similarity">
    <text evidence="1">Belongs to the phosphatidylserine decarboxylase family. PSD-A subfamily.</text>
</comment>
<evidence type="ECO:0000255" key="1">
    <source>
        <dbReference type="HAMAP-Rule" id="MF_00664"/>
    </source>
</evidence>
<evidence type="ECO:0000256" key="2">
    <source>
        <dbReference type="SAM" id="MobiDB-lite"/>
    </source>
</evidence>
<sequence length="265" mass="28955">MNRLYPHPIIAREGWPIIGGGLALSLLVSICCGWWSLPFWVFTVFALQFFRDPAREIPLNPEAVLSPVDGRIVVVERARDPYRDVDALKISIFMNVFNVHSQKSPADCTVTKVVYNKGKFVNADLDKASTENERNAVLATTASGREITFVQVAGLVARRILCYTQAGAKLSRGERYGFIRFGSRVDMYLPVDAQAQVAIGDKVTGVSTVLARLPLTAPQTESEPESEPALQTAPVETAANPSAEQRQIEAAAAKIQAAVQDVLKD</sequence>
<feature type="chain" id="PRO_0000029787" description="Phosphatidylserine decarboxylase beta chain" evidence="1">
    <location>
        <begin position="1"/>
        <end position="182"/>
    </location>
</feature>
<feature type="chain" id="PRO_0000029788" description="Phosphatidylserine decarboxylase alpha chain" evidence="1">
    <location>
        <begin position="183"/>
        <end position="265"/>
    </location>
</feature>
<feature type="region of interest" description="Disordered" evidence="2">
    <location>
        <begin position="216"/>
        <end position="246"/>
    </location>
</feature>
<feature type="active site" description="Schiff-base intermediate with substrate; via pyruvic acid" evidence="1">
    <location>
        <position position="183"/>
    </location>
</feature>
<feature type="site" description="Cleavage (non-hydrolytic); by autocatalysis" evidence="1">
    <location>
        <begin position="182"/>
        <end position="183"/>
    </location>
</feature>
<feature type="modified residue" description="Pyruvic acid (Ser); by autocatalysis" evidence="1">
    <location>
        <position position="183"/>
    </location>
</feature>